<feature type="chain" id="PRO_0000178935" description="UDP-N-acetylglucosamine 1-carboxyvinyltransferase 2">
    <location>
        <begin position="1"/>
        <end position="419"/>
    </location>
</feature>
<feature type="active site" description="Proton donor" evidence="1">
    <location>
        <position position="116"/>
    </location>
</feature>
<feature type="binding site" evidence="1">
    <location>
        <begin position="22"/>
        <end position="23"/>
    </location>
    <ligand>
        <name>phosphoenolpyruvate</name>
        <dbReference type="ChEBI" id="CHEBI:58702"/>
    </ligand>
</feature>
<feature type="binding site" evidence="1">
    <location>
        <position position="92"/>
    </location>
    <ligand>
        <name>UDP-N-acetyl-alpha-D-glucosamine</name>
        <dbReference type="ChEBI" id="CHEBI:57705"/>
    </ligand>
</feature>
<feature type="binding site" evidence="1">
    <location>
        <begin position="121"/>
        <end position="125"/>
    </location>
    <ligand>
        <name>UDP-N-acetyl-alpha-D-glucosamine</name>
        <dbReference type="ChEBI" id="CHEBI:57705"/>
    </ligand>
</feature>
<feature type="binding site" evidence="1">
    <location>
        <position position="306"/>
    </location>
    <ligand>
        <name>UDP-N-acetyl-alpha-D-glucosamine</name>
        <dbReference type="ChEBI" id="CHEBI:57705"/>
    </ligand>
</feature>
<feature type="binding site" evidence="1">
    <location>
        <position position="328"/>
    </location>
    <ligand>
        <name>UDP-N-acetyl-alpha-D-glucosamine</name>
        <dbReference type="ChEBI" id="CHEBI:57705"/>
    </ligand>
</feature>
<feature type="modified residue" description="2-(S-cysteinyl)pyruvic acid O-phosphothioketal" evidence="1">
    <location>
        <position position="116"/>
    </location>
</feature>
<comment type="function">
    <text evidence="1">Cell wall formation. Adds enolpyruvyl to UDP-N-acetylglucosamine.</text>
</comment>
<comment type="catalytic activity">
    <reaction evidence="1">
        <text>phosphoenolpyruvate + UDP-N-acetyl-alpha-D-glucosamine = UDP-N-acetyl-3-O-(1-carboxyvinyl)-alpha-D-glucosamine + phosphate</text>
        <dbReference type="Rhea" id="RHEA:18681"/>
        <dbReference type="ChEBI" id="CHEBI:43474"/>
        <dbReference type="ChEBI" id="CHEBI:57705"/>
        <dbReference type="ChEBI" id="CHEBI:58702"/>
        <dbReference type="ChEBI" id="CHEBI:68483"/>
        <dbReference type="EC" id="2.5.1.7"/>
    </reaction>
</comment>
<comment type="pathway">
    <text evidence="1">Cell wall biogenesis; peptidoglycan biosynthesis.</text>
</comment>
<comment type="subcellular location">
    <subcellularLocation>
        <location evidence="1">Cytoplasm</location>
    </subcellularLocation>
</comment>
<comment type="similarity">
    <text evidence="1">Belongs to the EPSP synthase family. MurA subfamily.</text>
</comment>
<reference key="1">
    <citation type="journal article" date="2001" name="Proc. Natl. Acad. Sci. U.S.A.">
        <title>Complete genome sequence of an M1 strain of Streptococcus pyogenes.</title>
        <authorList>
            <person name="Ferretti J.J."/>
            <person name="McShan W.M."/>
            <person name="Ajdic D.J."/>
            <person name="Savic D.J."/>
            <person name="Savic G."/>
            <person name="Lyon K."/>
            <person name="Primeaux C."/>
            <person name="Sezate S."/>
            <person name="Suvorov A.N."/>
            <person name="Kenton S."/>
            <person name="Lai H.S."/>
            <person name="Lin S.P."/>
            <person name="Qian Y."/>
            <person name="Jia H.G."/>
            <person name="Najar F.Z."/>
            <person name="Ren Q."/>
            <person name="Zhu H."/>
            <person name="Song L."/>
            <person name="White J."/>
            <person name="Yuan X."/>
            <person name="Clifton S.W."/>
            <person name="Roe B.A."/>
            <person name="McLaughlin R.E."/>
        </authorList>
    </citation>
    <scope>NUCLEOTIDE SEQUENCE [LARGE SCALE GENOMIC DNA]</scope>
    <source>
        <strain>ATCC 700294 / SF370 / Serotype M1</strain>
    </source>
</reference>
<reference key="2">
    <citation type="journal article" date="2005" name="J. Infect. Dis.">
        <title>Evolutionary origin and emergence of a highly successful clone of serotype M1 group A Streptococcus involved multiple horizontal gene transfer events.</title>
        <authorList>
            <person name="Sumby P."/>
            <person name="Porcella S.F."/>
            <person name="Madrigal A.G."/>
            <person name="Barbian K.D."/>
            <person name="Virtaneva K."/>
            <person name="Ricklefs S.M."/>
            <person name="Sturdevant D.E."/>
            <person name="Graham M.R."/>
            <person name="Vuopio-Varkila J."/>
            <person name="Hoe N.P."/>
            <person name="Musser J.M."/>
        </authorList>
    </citation>
    <scope>NUCLEOTIDE SEQUENCE [LARGE SCALE GENOMIC DNA]</scope>
    <source>
        <strain>ATCC BAA-947 / MGAS5005 / Serotype M1</strain>
    </source>
</reference>
<keyword id="KW-0131">Cell cycle</keyword>
<keyword id="KW-0132">Cell division</keyword>
<keyword id="KW-0133">Cell shape</keyword>
<keyword id="KW-0961">Cell wall biogenesis/degradation</keyword>
<keyword id="KW-0963">Cytoplasm</keyword>
<keyword id="KW-0573">Peptidoglycan synthesis</keyword>
<keyword id="KW-0670">Pyruvate</keyword>
<keyword id="KW-1185">Reference proteome</keyword>
<keyword id="KW-0808">Transferase</keyword>
<organism>
    <name type="scientific">Streptococcus pyogenes serotype M1</name>
    <dbReference type="NCBI Taxonomy" id="301447"/>
    <lineage>
        <taxon>Bacteria</taxon>
        <taxon>Bacillati</taxon>
        <taxon>Bacillota</taxon>
        <taxon>Bacilli</taxon>
        <taxon>Lactobacillales</taxon>
        <taxon>Streptococcaceae</taxon>
        <taxon>Streptococcus</taxon>
    </lineage>
</organism>
<gene>
    <name evidence="1" type="primary">murA2</name>
    <name type="synonym">murZ</name>
    <name type="ordered locus">SPy_1358</name>
    <name type="ordered locus">M5005_Spy1107</name>
</gene>
<accession>Q99Z78</accession>
<accession>Q48Y47</accession>
<sequence length="419" mass="44663">MRKIIINGGKALSGEVAVSGAKNSVVALIPAIILADDIVILDGVPAISDVDSLIEIMELMGATVNYHGDTLEIDPRGVQDIPMPYGKINSLRASYYFYGSLLGRFGQAVVGLPGGCDLGPRPIDLHLKAFEAMGVEVSYEGENMNLSTNGQKIHGAHIYMDTVSVGATINTMVAATKAQGKTVIENAAREPEIIDVATLLNNMGAHIRGAGTDIITIQGVQKLHGTRHQVIPDRIEAGTYIALAAAIGKGVKITNVLYEHLESFIAKLEEMGVRMTVEEDAIFVEKQESLKAITIKTSPYPGFATDLQQPLTPLLLKADGRGTIIDTIYEKRINHVPELMRMGADISVIGGQIVYQGPSRLTGAQVKATDLRAGAALVTAGLIAEGKTEITNIEFILRGYASIIAKLTALGADIQLIED</sequence>
<dbReference type="EC" id="2.5.1.7" evidence="1"/>
<dbReference type="EMBL" id="AE004092">
    <property type="protein sequence ID" value="AAK34186.1"/>
    <property type="molecule type" value="Genomic_DNA"/>
</dbReference>
<dbReference type="EMBL" id="CP000017">
    <property type="protein sequence ID" value="AAZ51725.1"/>
    <property type="molecule type" value="Genomic_DNA"/>
</dbReference>
<dbReference type="RefSeq" id="NP_269465.1">
    <property type="nucleotide sequence ID" value="NC_002737.2"/>
</dbReference>
<dbReference type="SMR" id="Q99Z78"/>
<dbReference type="PaxDb" id="1314-HKU360_01140"/>
<dbReference type="KEGG" id="spy:SPy_1358"/>
<dbReference type="KEGG" id="spz:M5005_Spy1107"/>
<dbReference type="PATRIC" id="fig|160490.10.peg.1185"/>
<dbReference type="HOGENOM" id="CLU_027387_0_0_9"/>
<dbReference type="OMA" id="RFGQRNF"/>
<dbReference type="UniPathway" id="UPA00219"/>
<dbReference type="Proteomes" id="UP000000750">
    <property type="component" value="Chromosome"/>
</dbReference>
<dbReference type="GO" id="GO:0005737">
    <property type="term" value="C:cytoplasm"/>
    <property type="evidence" value="ECO:0007669"/>
    <property type="project" value="UniProtKB-SubCell"/>
</dbReference>
<dbReference type="GO" id="GO:0008760">
    <property type="term" value="F:UDP-N-acetylglucosamine 1-carboxyvinyltransferase activity"/>
    <property type="evidence" value="ECO:0007669"/>
    <property type="project" value="UniProtKB-UniRule"/>
</dbReference>
<dbReference type="GO" id="GO:0051301">
    <property type="term" value="P:cell division"/>
    <property type="evidence" value="ECO:0007669"/>
    <property type="project" value="UniProtKB-KW"/>
</dbReference>
<dbReference type="GO" id="GO:0071555">
    <property type="term" value="P:cell wall organization"/>
    <property type="evidence" value="ECO:0007669"/>
    <property type="project" value="UniProtKB-KW"/>
</dbReference>
<dbReference type="GO" id="GO:0009252">
    <property type="term" value="P:peptidoglycan biosynthetic process"/>
    <property type="evidence" value="ECO:0007669"/>
    <property type="project" value="UniProtKB-UniRule"/>
</dbReference>
<dbReference type="GO" id="GO:0008360">
    <property type="term" value="P:regulation of cell shape"/>
    <property type="evidence" value="ECO:0007669"/>
    <property type="project" value="UniProtKB-KW"/>
</dbReference>
<dbReference type="GO" id="GO:0019277">
    <property type="term" value="P:UDP-N-acetylgalactosamine biosynthetic process"/>
    <property type="evidence" value="ECO:0007669"/>
    <property type="project" value="InterPro"/>
</dbReference>
<dbReference type="CDD" id="cd01555">
    <property type="entry name" value="UdpNAET"/>
    <property type="match status" value="1"/>
</dbReference>
<dbReference type="FunFam" id="3.65.10.10:FF:000001">
    <property type="entry name" value="UDP-N-acetylglucosamine 1-carboxyvinyltransferase"/>
    <property type="match status" value="1"/>
</dbReference>
<dbReference type="Gene3D" id="3.65.10.10">
    <property type="entry name" value="Enolpyruvate transferase domain"/>
    <property type="match status" value="2"/>
</dbReference>
<dbReference type="HAMAP" id="MF_00111">
    <property type="entry name" value="MurA"/>
    <property type="match status" value="1"/>
</dbReference>
<dbReference type="InterPro" id="IPR001986">
    <property type="entry name" value="Enolpyruvate_Tfrase_dom"/>
</dbReference>
<dbReference type="InterPro" id="IPR036968">
    <property type="entry name" value="Enolpyruvate_Tfrase_sf"/>
</dbReference>
<dbReference type="InterPro" id="IPR050068">
    <property type="entry name" value="MurA_subfamily"/>
</dbReference>
<dbReference type="InterPro" id="IPR013792">
    <property type="entry name" value="RNA3'P_cycl/enolpyr_Trfase_a/b"/>
</dbReference>
<dbReference type="InterPro" id="IPR005750">
    <property type="entry name" value="UDP_GlcNAc_COvinyl_MurA"/>
</dbReference>
<dbReference type="NCBIfam" id="TIGR01072">
    <property type="entry name" value="murA"/>
    <property type="match status" value="1"/>
</dbReference>
<dbReference type="NCBIfam" id="NF006873">
    <property type="entry name" value="PRK09369.1"/>
    <property type="match status" value="1"/>
</dbReference>
<dbReference type="NCBIfam" id="NF009470">
    <property type="entry name" value="PRK12830.1"/>
    <property type="match status" value="1"/>
</dbReference>
<dbReference type="PANTHER" id="PTHR43783">
    <property type="entry name" value="UDP-N-ACETYLGLUCOSAMINE 1-CARBOXYVINYLTRANSFERASE"/>
    <property type="match status" value="1"/>
</dbReference>
<dbReference type="PANTHER" id="PTHR43783:SF2">
    <property type="entry name" value="UDP-N-ACETYLGLUCOSAMINE 1-CARBOXYVINYLTRANSFERASE 2"/>
    <property type="match status" value="1"/>
</dbReference>
<dbReference type="Pfam" id="PF00275">
    <property type="entry name" value="EPSP_synthase"/>
    <property type="match status" value="1"/>
</dbReference>
<dbReference type="SUPFAM" id="SSF55205">
    <property type="entry name" value="EPT/RTPC-like"/>
    <property type="match status" value="1"/>
</dbReference>
<evidence type="ECO:0000255" key="1">
    <source>
        <dbReference type="HAMAP-Rule" id="MF_00111"/>
    </source>
</evidence>
<name>MURA2_STRP1</name>
<proteinExistence type="inferred from homology"/>
<protein>
    <recommendedName>
        <fullName evidence="1">UDP-N-acetylglucosamine 1-carboxyvinyltransferase 2</fullName>
        <ecNumber evidence="1">2.5.1.7</ecNumber>
    </recommendedName>
    <alternativeName>
        <fullName evidence="1">Enoylpyruvate transferase 2</fullName>
    </alternativeName>
    <alternativeName>
        <fullName evidence="1">UDP-N-acetylglucosamine enolpyruvyl transferase 2</fullName>
        <shortName evidence="1">EPT 2</shortName>
    </alternativeName>
</protein>